<gene>
    <name evidence="1" type="primary">thiG</name>
    <name type="ordered locus">PSHAa0483</name>
</gene>
<sequence>MPNNDYLTIYGEQIKSRLLIGSALYPSPAVMNESIVASGAEIVTVSLRRQQSAAAGDDFWQLIKNTGLKILPNTAGCHSVKEAITLAKMCREVFATDWIKLELIGDDYNLQPDPFALLEATKILIDDGFKVLPYCTDDLVLCQRLNALGCEVLMPWGAPIGTGKGLLNSYNLKTIRERLPEATLIVDAGLGLPSHACQALELGYDAVLLNSAIAGAGCPITMSRAFKAAVEAGRFAYNAKAMPEKDVAAPSTPTMGMPFWHQE</sequence>
<reference key="1">
    <citation type="journal article" date="2005" name="Genome Res.">
        <title>Coping with cold: the genome of the versatile marine Antarctica bacterium Pseudoalteromonas haloplanktis TAC125.</title>
        <authorList>
            <person name="Medigue C."/>
            <person name="Krin E."/>
            <person name="Pascal G."/>
            <person name="Barbe V."/>
            <person name="Bernsel A."/>
            <person name="Bertin P.N."/>
            <person name="Cheung F."/>
            <person name="Cruveiller S."/>
            <person name="D'Amico S."/>
            <person name="Duilio A."/>
            <person name="Fang G."/>
            <person name="Feller G."/>
            <person name="Ho C."/>
            <person name="Mangenot S."/>
            <person name="Marino G."/>
            <person name="Nilsson J."/>
            <person name="Parrilli E."/>
            <person name="Rocha E.P.C."/>
            <person name="Rouy Z."/>
            <person name="Sekowska A."/>
            <person name="Tutino M.L."/>
            <person name="Vallenet D."/>
            <person name="von Heijne G."/>
            <person name="Danchin A."/>
        </authorList>
    </citation>
    <scope>NUCLEOTIDE SEQUENCE [LARGE SCALE GENOMIC DNA]</scope>
    <source>
        <strain>TAC 125</strain>
    </source>
</reference>
<keyword id="KW-0963">Cytoplasm</keyword>
<keyword id="KW-1185">Reference proteome</keyword>
<keyword id="KW-0704">Schiff base</keyword>
<keyword id="KW-0784">Thiamine biosynthesis</keyword>
<keyword id="KW-0808">Transferase</keyword>
<protein>
    <recommendedName>
        <fullName evidence="1">Thiazole synthase</fullName>
        <ecNumber evidence="1">2.8.1.10</ecNumber>
    </recommendedName>
</protein>
<name>THIG_PSET1</name>
<dbReference type="EC" id="2.8.1.10" evidence="1"/>
<dbReference type="EMBL" id="CR954246">
    <property type="protein sequence ID" value="CAI85579.1"/>
    <property type="molecule type" value="Genomic_DNA"/>
</dbReference>
<dbReference type="SMR" id="Q3IFN6"/>
<dbReference type="STRING" id="326442.PSHAa0483"/>
<dbReference type="KEGG" id="pha:PSHAa0483"/>
<dbReference type="PATRIC" id="fig|326442.8.peg.459"/>
<dbReference type="eggNOG" id="COG2022">
    <property type="taxonomic scope" value="Bacteria"/>
</dbReference>
<dbReference type="HOGENOM" id="CLU_062233_1_0_6"/>
<dbReference type="BioCyc" id="PHAL326442:PSHA_RS02340-MONOMER"/>
<dbReference type="UniPathway" id="UPA00060"/>
<dbReference type="Proteomes" id="UP000006843">
    <property type="component" value="Chromosome I"/>
</dbReference>
<dbReference type="GO" id="GO:0005737">
    <property type="term" value="C:cytoplasm"/>
    <property type="evidence" value="ECO:0007669"/>
    <property type="project" value="UniProtKB-SubCell"/>
</dbReference>
<dbReference type="GO" id="GO:1990107">
    <property type="term" value="F:thiazole synthase activity"/>
    <property type="evidence" value="ECO:0007669"/>
    <property type="project" value="UniProtKB-EC"/>
</dbReference>
<dbReference type="GO" id="GO:0009229">
    <property type="term" value="P:thiamine diphosphate biosynthetic process"/>
    <property type="evidence" value="ECO:0007669"/>
    <property type="project" value="UniProtKB-UniRule"/>
</dbReference>
<dbReference type="CDD" id="cd04728">
    <property type="entry name" value="ThiG"/>
    <property type="match status" value="1"/>
</dbReference>
<dbReference type="Gene3D" id="3.20.20.70">
    <property type="entry name" value="Aldolase class I"/>
    <property type="match status" value="1"/>
</dbReference>
<dbReference type="HAMAP" id="MF_00443">
    <property type="entry name" value="ThiG"/>
    <property type="match status" value="1"/>
</dbReference>
<dbReference type="InterPro" id="IPR013785">
    <property type="entry name" value="Aldolase_TIM"/>
</dbReference>
<dbReference type="InterPro" id="IPR033983">
    <property type="entry name" value="Thiazole_synthase_ThiG"/>
</dbReference>
<dbReference type="InterPro" id="IPR008867">
    <property type="entry name" value="ThiG"/>
</dbReference>
<dbReference type="PANTHER" id="PTHR34266">
    <property type="entry name" value="THIAZOLE SYNTHASE"/>
    <property type="match status" value="1"/>
</dbReference>
<dbReference type="PANTHER" id="PTHR34266:SF2">
    <property type="entry name" value="THIAZOLE SYNTHASE"/>
    <property type="match status" value="1"/>
</dbReference>
<dbReference type="Pfam" id="PF05690">
    <property type="entry name" value="ThiG"/>
    <property type="match status" value="1"/>
</dbReference>
<dbReference type="SUPFAM" id="SSF110399">
    <property type="entry name" value="ThiG-like"/>
    <property type="match status" value="1"/>
</dbReference>
<organism>
    <name type="scientific">Pseudoalteromonas translucida (strain TAC 125)</name>
    <dbReference type="NCBI Taxonomy" id="326442"/>
    <lineage>
        <taxon>Bacteria</taxon>
        <taxon>Pseudomonadati</taxon>
        <taxon>Pseudomonadota</taxon>
        <taxon>Gammaproteobacteria</taxon>
        <taxon>Alteromonadales</taxon>
        <taxon>Pseudoalteromonadaceae</taxon>
        <taxon>Pseudoalteromonas</taxon>
    </lineage>
</organism>
<accession>Q3IFN6</accession>
<feature type="chain" id="PRO_0000236355" description="Thiazole synthase">
    <location>
        <begin position="1"/>
        <end position="263"/>
    </location>
</feature>
<feature type="active site" description="Schiff-base intermediate with DXP" evidence="1">
    <location>
        <position position="100"/>
    </location>
</feature>
<feature type="binding site" evidence="1">
    <location>
        <position position="161"/>
    </location>
    <ligand>
        <name>1-deoxy-D-xylulose 5-phosphate</name>
        <dbReference type="ChEBI" id="CHEBI:57792"/>
    </ligand>
</feature>
<feature type="binding site" evidence="1">
    <location>
        <begin position="188"/>
        <end position="189"/>
    </location>
    <ligand>
        <name>1-deoxy-D-xylulose 5-phosphate</name>
        <dbReference type="ChEBI" id="CHEBI:57792"/>
    </ligand>
</feature>
<feature type="binding site" evidence="1">
    <location>
        <begin position="210"/>
        <end position="211"/>
    </location>
    <ligand>
        <name>1-deoxy-D-xylulose 5-phosphate</name>
        <dbReference type="ChEBI" id="CHEBI:57792"/>
    </ligand>
</feature>
<proteinExistence type="inferred from homology"/>
<evidence type="ECO:0000255" key="1">
    <source>
        <dbReference type="HAMAP-Rule" id="MF_00443"/>
    </source>
</evidence>
<comment type="function">
    <text evidence="1">Catalyzes the rearrangement of 1-deoxy-D-xylulose 5-phosphate (DXP) to produce the thiazole phosphate moiety of thiamine. Sulfur is provided by the thiocarboxylate moiety of the carrier protein ThiS. In vitro, sulfur can be provided by H(2)S.</text>
</comment>
<comment type="catalytic activity">
    <reaction evidence="1">
        <text>[ThiS sulfur-carrier protein]-C-terminal-Gly-aminoethanethioate + 2-iminoacetate + 1-deoxy-D-xylulose 5-phosphate = [ThiS sulfur-carrier protein]-C-terminal Gly-Gly + 2-[(2R,5Z)-2-carboxy-4-methylthiazol-5(2H)-ylidene]ethyl phosphate + 2 H2O + H(+)</text>
        <dbReference type="Rhea" id="RHEA:26297"/>
        <dbReference type="Rhea" id="RHEA-COMP:12909"/>
        <dbReference type="Rhea" id="RHEA-COMP:19908"/>
        <dbReference type="ChEBI" id="CHEBI:15377"/>
        <dbReference type="ChEBI" id="CHEBI:15378"/>
        <dbReference type="ChEBI" id="CHEBI:57792"/>
        <dbReference type="ChEBI" id="CHEBI:62899"/>
        <dbReference type="ChEBI" id="CHEBI:77846"/>
        <dbReference type="ChEBI" id="CHEBI:90778"/>
        <dbReference type="ChEBI" id="CHEBI:232372"/>
        <dbReference type="EC" id="2.8.1.10"/>
    </reaction>
</comment>
<comment type="pathway">
    <text evidence="1">Cofactor biosynthesis; thiamine diphosphate biosynthesis.</text>
</comment>
<comment type="subunit">
    <text evidence="1">Homotetramer. Forms heterodimers with either ThiH or ThiS.</text>
</comment>
<comment type="subcellular location">
    <subcellularLocation>
        <location evidence="1">Cytoplasm</location>
    </subcellularLocation>
</comment>
<comment type="similarity">
    <text evidence="1">Belongs to the ThiG family.</text>
</comment>